<keyword id="KW-0067">ATP-binding</keyword>
<keyword id="KW-0436">Ligase</keyword>
<keyword id="KW-0460">Magnesium</keyword>
<keyword id="KW-0479">Metal-binding</keyword>
<keyword id="KW-0547">Nucleotide-binding</keyword>
<keyword id="KW-0816">Tricarboxylic acid cycle</keyword>
<proteinExistence type="inferred from homology"/>
<sequence>MNIHEYQGKDILRKFGVSVPKGIVAFTAEEARQAAEQLFEEQENPVVVVKAQIHAGGRGKAGGVKLAKSPDEVFDIARQMIGCTLVTHQTGPEGKEVRRLLVEEGMNIEKEFYVGITLDRATSQNVLMVSTEGGMEIETVAEETPEKLLKIQIHPLQGLQGFQARQAAFFLGLEGDKFKNTVKFITALYKAYTAIDASIAEINPLVITKEGKVMALDAKINFDSNALFRHKDFLELRDISEEDPFEVEASKSNLNYVRLDGNVGCMVNGAGLAMATMDMIQLAGGKPANFLDVGGSASPETVEEGFKIIMSDKNVKAILINIFGGIVRCDRVAGGVIEAAKKVGLDMPVIVRLEGTNAEIAQKMLDESGLNLIAANGLREAAQKVNEALS</sequence>
<comment type="function">
    <text evidence="1">Succinyl-CoA synthetase functions in the citric acid cycle (TCA), coupling the hydrolysis of succinyl-CoA to the synthesis of either ATP or GTP and thus represents the only step of substrate-level phosphorylation in the TCA. The beta subunit provides nucleotide specificity of the enzyme and binds the substrate succinate, while the binding sites for coenzyme A and phosphate are found in the alpha subunit.</text>
</comment>
<comment type="catalytic activity">
    <reaction evidence="1">
        <text>succinate + ATP + CoA = succinyl-CoA + ADP + phosphate</text>
        <dbReference type="Rhea" id="RHEA:17661"/>
        <dbReference type="ChEBI" id="CHEBI:30031"/>
        <dbReference type="ChEBI" id="CHEBI:30616"/>
        <dbReference type="ChEBI" id="CHEBI:43474"/>
        <dbReference type="ChEBI" id="CHEBI:57287"/>
        <dbReference type="ChEBI" id="CHEBI:57292"/>
        <dbReference type="ChEBI" id="CHEBI:456216"/>
        <dbReference type="EC" id="6.2.1.5"/>
    </reaction>
    <physiologicalReaction direction="right-to-left" evidence="1">
        <dbReference type="Rhea" id="RHEA:17663"/>
    </physiologicalReaction>
</comment>
<comment type="catalytic activity">
    <reaction evidence="1">
        <text>GTP + succinate + CoA = succinyl-CoA + GDP + phosphate</text>
        <dbReference type="Rhea" id="RHEA:22120"/>
        <dbReference type="ChEBI" id="CHEBI:30031"/>
        <dbReference type="ChEBI" id="CHEBI:37565"/>
        <dbReference type="ChEBI" id="CHEBI:43474"/>
        <dbReference type="ChEBI" id="CHEBI:57287"/>
        <dbReference type="ChEBI" id="CHEBI:57292"/>
        <dbReference type="ChEBI" id="CHEBI:58189"/>
    </reaction>
    <physiologicalReaction direction="right-to-left" evidence="1">
        <dbReference type="Rhea" id="RHEA:22122"/>
    </physiologicalReaction>
</comment>
<comment type="cofactor">
    <cofactor evidence="1">
        <name>Mg(2+)</name>
        <dbReference type="ChEBI" id="CHEBI:18420"/>
    </cofactor>
    <text evidence="1">Binds 1 Mg(2+) ion per subunit.</text>
</comment>
<comment type="pathway">
    <text evidence="1">Carbohydrate metabolism; tricarboxylic acid cycle; succinate from succinyl-CoA (ligase route): step 1/1.</text>
</comment>
<comment type="subunit">
    <text evidence="1">Heterotetramer of two alpha and two beta subunits.</text>
</comment>
<comment type="similarity">
    <text evidence="1">Belongs to the succinate/malate CoA ligase beta subunit family.</text>
</comment>
<gene>
    <name evidence="1" type="primary">sucC</name>
    <name type="ordered locus">Paes_0607</name>
</gene>
<feature type="chain" id="PRO_1000129209" description="Succinate--CoA ligase [ADP-forming] subunit beta">
    <location>
        <begin position="1"/>
        <end position="390"/>
    </location>
</feature>
<feature type="domain" description="ATP-grasp" evidence="1">
    <location>
        <begin position="9"/>
        <end position="248"/>
    </location>
</feature>
<feature type="binding site" evidence="1">
    <location>
        <position position="50"/>
    </location>
    <ligand>
        <name>ATP</name>
        <dbReference type="ChEBI" id="CHEBI:30616"/>
    </ligand>
</feature>
<feature type="binding site" evidence="1">
    <location>
        <begin position="57"/>
        <end position="59"/>
    </location>
    <ligand>
        <name>ATP</name>
        <dbReference type="ChEBI" id="CHEBI:30616"/>
    </ligand>
</feature>
<feature type="binding site" evidence="1">
    <location>
        <position position="103"/>
    </location>
    <ligand>
        <name>ATP</name>
        <dbReference type="ChEBI" id="CHEBI:30616"/>
    </ligand>
</feature>
<feature type="binding site" evidence="1">
    <location>
        <position position="106"/>
    </location>
    <ligand>
        <name>ATP</name>
        <dbReference type="ChEBI" id="CHEBI:30616"/>
    </ligand>
</feature>
<feature type="binding site" evidence="1">
    <location>
        <position position="111"/>
    </location>
    <ligand>
        <name>ATP</name>
        <dbReference type="ChEBI" id="CHEBI:30616"/>
    </ligand>
</feature>
<feature type="binding site" evidence="1">
    <location>
        <position position="203"/>
    </location>
    <ligand>
        <name>Mg(2+)</name>
        <dbReference type="ChEBI" id="CHEBI:18420"/>
    </ligand>
</feature>
<feature type="binding site" evidence="1">
    <location>
        <position position="217"/>
    </location>
    <ligand>
        <name>Mg(2+)</name>
        <dbReference type="ChEBI" id="CHEBI:18420"/>
    </ligand>
</feature>
<feature type="binding site" evidence="1">
    <location>
        <position position="268"/>
    </location>
    <ligand>
        <name>substrate</name>
        <note>ligand shared with subunit alpha</note>
    </ligand>
</feature>
<feature type="binding site" evidence="1">
    <location>
        <begin position="325"/>
        <end position="327"/>
    </location>
    <ligand>
        <name>substrate</name>
        <note>ligand shared with subunit alpha</note>
    </ligand>
</feature>
<evidence type="ECO:0000255" key="1">
    <source>
        <dbReference type="HAMAP-Rule" id="MF_00558"/>
    </source>
</evidence>
<reference key="1">
    <citation type="submission" date="2008-06" db="EMBL/GenBank/DDBJ databases">
        <title>Complete sequence of chromosome of Prosthecochloris aestuarii DSM 271.</title>
        <authorList>
            <consortium name="US DOE Joint Genome Institute"/>
            <person name="Lucas S."/>
            <person name="Copeland A."/>
            <person name="Lapidus A."/>
            <person name="Glavina del Rio T."/>
            <person name="Dalin E."/>
            <person name="Tice H."/>
            <person name="Bruce D."/>
            <person name="Goodwin L."/>
            <person name="Pitluck S."/>
            <person name="Schmutz J."/>
            <person name="Larimer F."/>
            <person name="Land M."/>
            <person name="Hauser L."/>
            <person name="Kyrpides N."/>
            <person name="Anderson I."/>
            <person name="Liu Z."/>
            <person name="Li T."/>
            <person name="Zhao F."/>
            <person name="Overmann J."/>
            <person name="Bryant D.A."/>
            <person name="Richardson P."/>
        </authorList>
    </citation>
    <scope>NUCLEOTIDE SEQUENCE [LARGE SCALE GENOMIC DNA]</scope>
    <source>
        <strain>DSM 271 / SK 413</strain>
    </source>
</reference>
<dbReference type="EC" id="6.2.1.5" evidence="1"/>
<dbReference type="EMBL" id="CP001108">
    <property type="protein sequence ID" value="ACF45663.1"/>
    <property type="molecule type" value="Genomic_DNA"/>
</dbReference>
<dbReference type="RefSeq" id="WP_012505200.1">
    <property type="nucleotide sequence ID" value="NC_011059.1"/>
</dbReference>
<dbReference type="SMR" id="B4S612"/>
<dbReference type="STRING" id="290512.Paes_0607"/>
<dbReference type="KEGG" id="paa:Paes_0607"/>
<dbReference type="eggNOG" id="COG0045">
    <property type="taxonomic scope" value="Bacteria"/>
</dbReference>
<dbReference type="HOGENOM" id="CLU_037430_0_2_10"/>
<dbReference type="UniPathway" id="UPA00223">
    <property type="reaction ID" value="UER00999"/>
</dbReference>
<dbReference type="Proteomes" id="UP000002725">
    <property type="component" value="Chromosome"/>
</dbReference>
<dbReference type="GO" id="GO:0005829">
    <property type="term" value="C:cytosol"/>
    <property type="evidence" value="ECO:0007669"/>
    <property type="project" value="TreeGrafter"/>
</dbReference>
<dbReference type="GO" id="GO:0042709">
    <property type="term" value="C:succinate-CoA ligase complex"/>
    <property type="evidence" value="ECO:0007669"/>
    <property type="project" value="TreeGrafter"/>
</dbReference>
<dbReference type="GO" id="GO:0005524">
    <property type="term" value="F:ATP binding"/>
    <property type="evidence" value="ECO:0007669"/>
    <property type="project" value="UniProtKB-UniRule"/>
</dbReference>
<dbReference type="GO" id="GO:0000287">
    <property type="term" value="F:magnesium ion binding"/>
    <property type="evidence" value="ECO:0007669"/>
    <property type="project" value="UniProtKB-UniRule"/>
</dbReference>
<dbReference type="GO" id="GO:0004775">
    <property type="term" value="F:succinate-CoA ligase (ADP-forming) activity"/>
    <property type="evidence" value="ECO:0007669"/>
    <property type="project" value="UniProtKB-UniRule"/>
</dbReference>
<dbReference type="GO" id="GO:0004776">
    <property type="term" value="F:succinate-CoA ligase (GDP-forming) activity"/>
    <property type="evidence" value="ECO:0007669"/>
    <property type="project" value="RHEA"/>
</dbReference>
<dbReference type="GO" id="GO:0006104">
    <property type="term" value="P:succinyl-CoA metabolic process"/>
    <property type="evidence" value="ECO:0007669"/>
    <property type="project" value="TreeGrafter"/>
</dbReference>
<dbReference type="GO" id="GO:0006099">
    <property type="term" value="P:tricarboxylic acid cycle"/>
    <property type="evidence" value="ECO:0007669"/>
    <property type="project" value="UniProtKB-UniRule"/>
</dbReference>
<dbReference type="FunFam" id="3.30.1490.20:FF:000002">
    <property type="entry name" value="Succinate--CoA ligase [ADP-forming] subunit beta"/>
    <property type="match status" value="1"/>
</dbReference>
<dbReference type="FunFam" id="3.30.470.20:FF:000002">
    <property type="entry name" value="Succinate--CoA ligase [ADP-forming] subunit beta"/>
    <property type="match status" value="1"/>
</dbReference>
<dbReference type="FunFam" id="3.40.50.261:FF:000001">
    <property type="entry name" value="Succinate--CoA ligase [ADP-forming] subunit beta"/>
    <property type="match status" value="1"/>
</dbReference>
<dbReference type="Gene3D" id="3.30.1490.20">
    <property type="entry name" value="ATP-grasp fold, A domain"/>
    <property type="match status" value="1"/>
</dbReference>
<dbReference type="Gene3D" id="3.30.470.20">
    <property type="entry name" value="ATP-grasp fold, B domain"/>
    <property type="match status" value="1"/>
</dbReference>
<dbReference type="Gene3D" id="3.40.50.261">
    <property type="entry name" value="Succinyl-CoA synthetase domains"/>
    <property type="match status" value="1"/>
</dbReference>
<dbReference type="HAMAP" id="MF_00558">
    <property type="entry name" value="Succ_CoA_beta"/>
    <property type="match status" value="1"/>
</dbReference>
<dbReference type="InterPro" id="IPR011761">
    <property type="entry name" value="ATP-grasp"/>
</dbReference>
<dbReference type="InterPro" id="IPR013650">
    <property type="entry name" value="ATP-grasp_succ-CoA_synth-type"/>
</dbReference>
<dbReference type="InterPro" id="IPR013815">
    <property type="entry name" value="ATP_grasp_subdomain_1"/>
</dbReference>
<dbReference type="InterPro" id="IPR017866">
    <property type="entry name" value="Succ-CoA_synthase_bsu_CS"/>
</dbReference>
<dbReference type="InterPro" id="IPR005811">
    <property type="entry name" value="SUCC_ACL_C"/>
</dbReference>
<dbReference type="InterPro" id="IPR005809">
    <property type="entry name" value="Succ_CoA_ligase-like_bsu"/>
</dbReference>
<dbReference type="InterPro" id="IPR016102">
    <property type="entry name" value="Succinyl-CoA_synth-like"/>
</dbReference>
<dbReference type="NCBIfam" id="NF001913">
    <property type="entry name" value="PRK00696.1"/>
    <property type="match status" value="1"/>
</dbReference>
<dbReference type="NCBIfam" id="TIGR01016">
    <property type="entry name" value="sucCoAbeta"/>
    <property type="match status" value="1"/>
</dbReference>
<dbReference type="PANTHER" id="PTHR11815:SF10">
    <property type="entry name" value="SUCCINATE--COA LIGASE [GDP-FORMING] SUBUNIT BETA, MITOCHONDRIAL"/>
    <property type="match status" value="1"/>
</dbReference>
<dbReference type="PANTHER" id="PTHR11815">
    <property type="entry name" value="SUCCINYL-COA SYNTHETASE BETA CHAIN"/>
    <property type="match status" value="1"/>
</dbReference>
<dbReference type="Pfam" id="PF08442">
    <property type="entry name" value="ATP-grasp_2"/>
    <property type="match status" value="1"/>
</dbReference>
<dbReference type="Pfam" id="PF00549">
    <property type="entry name" value="Ligase_CoA"/>
    <property type="match status" value="1"/>
</dbReference>
<dbReference type="PIRSF" id="PIRSF001554">
    <property type="entry name" value="SucCS_beta"/>
    <property type="match status" value="1"/>
</dbReference>
<dbReference type="SUPFAM" id="SSF56059">
    <property type="entry name" value="Glutathione synthetase ATP-binding domain-like"/>
    <property type="match status" value="1"/>
</dbReference>
<dbReference type="SUPFAM" id="SSF52210">
    <property type="entry name" value="Succinyl-CoA synthetase domains"/>
    <property type="match status" value="1"/>
</dbReference>
<dbReference type="PROSITE" id="PS50975">
    <property type="entry name" value="ATP_GRASP"/>
    <property type="match status" value="1"/>
</dbReference>
<dbReference type="PROSITE" id="PS01217">
    <property type="entry name" value="SUCCINYL_COA_LIG_3"/>
    <property type="match status" value="1"/>
</dbReference>
<name>SUCC_PROA2</name>
<organism>
    <name type="scientific">Prosthecochloris aestuarii (strain DSM 271 / SK 413)</name>
    <dbReference type="NCBI Taxonomy" id="290512"/>
    <lineage>
        <taxon>Bacteria</taxon>
        <taxon>Pseudomonadati</taxon>
        <taxon>Chlorobiota</taxon>
        <taxon>Chlorobiia</taxon>
        <taxon>Chlorobiales</taxon>
        <taxon>Chlorobiaceae</taxon>
        <taxon>Prosthecochloris</taxon>
    </lineage>
</organism>
<protein>
    <recommendedName>
        <fullName evidence="1">Succinate--CoA ligase [ADP-forming] subunit beta</fullName>
        <ecNumber evidence="1">6.2.1.5</ecNumber>
    </recommendedName>
    <alternativeName>
        <fullName evidence="1">Succinyl-CoA synthetase subunit beta</fullName>
        <shortName evidence="1">SCS-beta</shortName>
    </alternativeName>
</protein>
<accession>B4S612</accession>